<gene>
    <name type="primary">cpeA</name>
</gene>
<name>PHEA_PSETP</name>
<organism>
    <name type="scientific">Pseudanabaena tenuis (strain PCC 7409)</name>
    <dbReference type="NCBI Taxonomy" id="29415"/>
    <lineage>
        <taxon>Bacteria</taxon>
        <taxon>Bacillati</taxon>
        <taxon>Cyanobacteriota</taxon>
        <taxon>Cyanophyceae</taxon>
        <taxon>Pseudanabaenales</taxon>
        <taxon>Pseudanabaenaceae</taxon>
        <taxon>Pseudanabaena</taxon>
    </lineage>
</organism>
<protein>
    <recommendedName>
        <fullName>C-phycoerythrin alpha chain</fullName>
    </recommendedName>
</protein>
<comment type="function">
    <text>Light-harvesting photosynthetic bile pigment-protein from the phycobiliprotein complex.</text>
</comment>
<comment type="subunit">
    <text>Heterodimer of an alpha and a beta chain.</text>
</comment>
<comment type="subcellular location">
    <subcellularLocation>
        <location evidence="1">Cellular thylakoid membrane</location>
        <topology evidence="1">Peripheral membrane protein</topology>
        <orientation evidence="1">Cytoplasmic side</orientation>
    </subcellularLocation>
    <text evidence="1">Forms the periphery of the phycobilisome rod.</text>
</comment>
<comment type="PTM">
    <text evidence="1">Contains two covalently linked bilin chromophores.</text>
</comment>
<comment type="similarity">
    <text evidence="2">Belongs to the phycobiliprotein family.</text>
</comment>
<proteinExistence type="inferred from homology"/>
<accession>P29296</accession>
<sequence length="164" mass="17677">MKSVVTTVISAADAAGRFPSTSDLESVQGSIQRAAARLEAAEKLANNIDAVAKEAYNAAIKKYPYLNNAGEANSTDTFKAKCARDIKHYLRLIQYSLVVGGTGPLDEWGIAGQREVYRSLGLPTAPYVEALSYARNRGCSPRDLSPQALTEYNALLDYAINSLS</sequence>
<dbReference type="EMBL" id="X63073">
    <property type="protein sequence ID" value="CAA44795.1"/>
    <property type="molecule type" value="Genomic_DNA"/>
</dbReference>
<dbReference type="SMR" id="P29296"/>
<dbReference type="TCDB" id="2.A.114.1.9">
    <property type="family name" value="the putative peptide transporter carbon starvation csta (csta) family"/>
</dbReference>
<dbReference type="GO" id="GO:0030089">
    <property type="term" value="C:phycobilisome"/>
    <property type="evidence" value="ECO:0007669"/>
    <property type="project" value="UniProtKB-KW"/>
</dbReference>
<dbReference type="GO" id="GO:0031676">
    <property type="term" value="C:plasma membrane-derived thylakoid membrane"/>
    <property type="evidence" value="ECO:0007669"/>
    <property type="project" value="UniProtKB-SubCell"/>
</dbReference>
<dbReference type="GO" id="GO:0015979">
    <property type="term" value="P:photosynthesis"/>
    <property type="evidence" value="ECO:0007669"/>
    <property type="project" value="UniProtKB-KW"/>
</dbReference>
<dbReference type="Gene3D" id="1.10.490.20">
    <property type="entry name" value="Phycocyanins"/>
    <property type="match status" value="1"/>
</dbReference>
<dbReference type="InterPro" id="IPR009050">
    <property type="entry name" value="Globin-like_sf"/>
</dbReference>
<dbReference type="InterPro" id="IPR012128">
    <property type="entry name" value="Phycobilisome_asu/bsu"/>
</dbReference>
<dbReference type="InterPro" id="IPR038719">
    <property type="entry name" value="Phycobilisome_asu/bsu_sf"/>
</dbReference>
<dbReference type="PANTHER" id="PTHR34011:SF4">
    <property type="entry name" value="C-PHYCOCYANIN ALPHA SUBUNIT"/>
    <property type="match status" value="1"/>
</dbReference>
<dbReference type="PANTHER" id="PTHR34011">
    <property type="entry name" value="PHYCOBILISOME 32.1 KDA LINKER POLYPEPTIDE, PHYCOCYANIN-ASSOCIATED, ROD 2-RELATED"/>
    <property type="match status" value="1"/>
</dbReference>
<dbReference type="Pfam" id="PF00502">
    <property type="entry name" value="Phycobilisome"/>
    <property type="match status" value="1"/>
</dbReference>
<dbReference type="PIRSF" id="PIRSF000081">
    <property type="entry name" value="Phycocyanin"/>
    <property type="match status" value="1"/>
</dbReference>
<dbReference type="SUPFAM" id="SSF46458">
    <property type="entry name" value="Globin-like"/>
    <property type="match status" value="1"/>
</dbReference>
<evidence type="ECO:0000250" key="1"/>
<evidence type="ECO:0000305" key="2"/>
<feature type="chain" id="PRO_0000199181" description="C-phycoerythrin alpha chain">
    <location>
        <begin position="1"/>
        <end position="164"/>
    </location>
</feature>
<feature type="binding site" description="covalent" evidence="1">
    <location>
        <position position="82"/>
    </location>
    <ligand>
        <name>(2R,3E)-phycoerythrobilin</name>
        <dbReference type="ChEBI" id="CHEBI:85276"/>
        <label>1</label>
    </ligand>
</feature>
<feature type="binding site" description="covalent" evidence="1">
    <location>
        <position position="139"/>
    </location>
    <ligand>
        <name>(2R,3E)-phycoerythrobilin</name>
        <dbReference type="ChEBI" id="CHEBI:85276"/>
        <label>2</label>
    </ligand>
</feature>
<keyword id="KW-0042">Antenna complex</keyword>
<keyword id="KW-0089">Bile pigment</keyword>
<keyword id="KW-0157">Chromophore</keyword>
<keyword id="KW-0249">Electron transport</keyword>
<keyword id="KW-0472">Membrane</keyword>
<keyword id="KW-0602">Photosynthesis</keyword>
<keyword id="KW-0605">Phycobilisome</keyword>
<keyword id="KW-0793">Thylakoid</keyword>
<keyword id="KW-0813">Transport</keyword>
<reference key="1">
    <citation type="journal article" date="1991" name="Mol. Microbiol.">
        <title>Molecular cloning and transcriptional analysis of the cpeBA operon of the cyanobacterium Pseudanabaena species PCC7409.</title>
        <authorList>
            <person name="Dubbs J.M."/>
            <person name="Bryant D.A."/>
        </authorList>
    </citation>
    <scope>NUCLEOTIDE SEQUENCE [GENOMIC DNA]</scope>
</reference>